<reference key="1">
    <citation type="journal article" date="2007" name="J. Bacteriol.">
        <title>The complete genome sequence of Campylobacter jejuni strain 81116 (NCTC11828).</title>
        <authorList>
            <person name="Pearson B.M."/>
            <person name="Gaskin D.J.H."/>
            <person name="Segers R.P.A.M."/>
            <person name="Wells J.M."/>
            <person name="Nuijten P.J.M."/>
            <person name="van Vliet A.H.M."/>
        </authorList>
    </citation>
    <scope>NUCLEOTIDE SEQUENCE [LARGE SCALE GENOMIC DNA]</scope>
    <source>
        <strain>81116 / NCTC 11828</strain>
    </source>
</reference>
<keyword id="KW-0687">Ribonucleoprotein</keyword>
<keyword id="KW-0689">Ribosomal protein</keyword>
<keyword id="KW-0694">RNA-binding</keyword>
<keyword id="KW-0699">rRNA-binding</keyword>
<protein>
    <recommendedName>
        <fullName evidence="1">Large ribosomal subunit protein uL24</fullName>
    </recommendedName>
    <alternativeName>
        <fullName evidence="2">50S ribosomal protein L24</fullName>
    </alternativeName>
</protein>
<feature type="chain" id="PRO_1000073258" description="Large ribosomal subunit protein uL24">
    <location>
        <begin position="1"/>
        <end position="77"/>
    </location>
</feature>
<dbReference type="EMBL" id="CP000814">
    <property type="protein sequence ID" value="ABV53197.1"/>
    <property type="molecule type" value="Genomic_DNA"/>
</dbReference>
<dbReference type="RefSeq" id="WP_002779437.1">
    <property type="nucleotide sequence ID" value="NC_009839.1"/>
</dbReference>
<dbReference type="SMR" id="A8FP10"/>
<dbReference type="GeneID" id="66544932"/>
<dbReference type="KEGG" id="cju:C8J_1600"/>
<dbReference type="HOGENOM" id="CLU_093315_3_0_7"/>
<dbReference type="GO" id="GO:1990904">
    <property type="term" value="C:ribonucleoprotein complex"/>
    <property type="evidence" value="ECO:0007669"/>
    <property type="project" value="UniProtKB-KW"/>
</dbReference>
<dbReference type="GO" id="GO:0005840">
    <property type="term" value="C:ribosome"/>
    <property type="evidence" value="ECO:0007669"/>
    <property type="project" value="UniProtKB-KW"/>
</dbReference>
<dbReference type="GO" id="GO:0019843">
    <property type="term" value="F:rRNA binding"/>
    <property type="evidence" value="ECO:0007669"/>
    <property type="project" value="UniProtKB-UniRule"/>
</dbReference>
<dbReference type="GO" id="GO:0003735">
    <property type="term" value="F:structural constituent of ribosome"/>
    <property type="evidence" value="ECO:0007669"/>
    <property type="project" value="InterPro"/>
</dbReference>
<dbReference type="GO" id="GO:0006412">
    <property type="term" value="P:translation"/>
    <property type="evidence" value="ECO:0007669"/>
    <property type="project" value="UniProtKB-UniRule"/>
</dbReference>
<dbReference type="CDD" id="cd06089">
    <property type="entry name" value="KOW_RPL26"/>
    <property type="match status" value="1"/>
</dbReference>
<dbReference type="FunFam" id="2.30.30.30:FF:000023">
    <property type="entry name" value="50S ribosomal protein L24"/>
    <property type="match status" value="1"/>
</dbReference>
<dbReference type="Gene3D" id="2.30.30.30">
    <property type="match status" value="1"/>
</dbReference>
<dbReference type="HAMAP" id="MF_01326_B">
    <property type="entry name" value="Ribosomal_uL24_B"/>
    <property type="match status" value="1"/>
</dbReference>
<dbReference type="InterPro" id="IPR005824">
    <property type="entry name" value="KOW"/>
</dbReference>
<dbReference type="InterPro" id="IPR014722">
    <property type="entry name" value="Rib_uL2_dom2"/>
</dbReference>
<dbReference type="InterPro" id="IPR003256">
    <property type="entry name" value="Ribosomal_uL24"/>
</dbReference>
<dbReference type="InterPro" id="IPR005825">
    <property type="entry name" value="Ribosomal_uL24_CS"/>
</dbReference>
<dbReference type="InterPro" id="IPR041988">
    <property type="entry name" value="Ribosomal_uL24_KOW"/>
</dbReference>
<dbReference type="InterPro" id="IPR008991">
    <property type="entry name" value="Translation_prot_SH3-like_sf"/>
</dbReference>
<dbReference type="NCBIfam" id="TIGR01079">
    <property type="entry name" value="rplX_bact"/>
    <property type="match status" value="1"/>
</dbReference>
<dbReference type="PANTHER" id="PTHR12903">
    <property type="entry name" value="MITOCHONDRIAL RIBOSOMAL PROTEIN L24"/>
    <property type="match status" value="1"/>
</dbReference>
<dbReference type="Pfam" id="PF00467">
    <property type="entry name" value="KOW"/>
    <property type="match status" value="1"/>
</dbReference>
<dbReference type="Pfam" id="PF17136">
    <property type="entry name" value="ribosomal_L24"/>
    <property type="match status" value="1"/>
</dbReference>
<dbReference type="SMART" id="SM00739">
    <property type="entry name" value="KOW"/>
    <property type="match status" value="1"/>
</dbReference>
<dbReference type="SUPFAM" id="SSF50104">
    <property type="entry name" value="Translation proteins SH3-like domain"/>
    <property type="match status" value="1"/>
</dbReference>
<dbReference type="PROSITE" id="PS01108">
    <property type="entry name" value="RIBOSOMAL_L24"/>
    <property type="match status" value="1"/>
</dbReference>
<proteinExistence type="inferred from homology"/>
<name>RL24_CAMJ8</name>
<evidence type="ECO:0000255" key="1">
    <source>
        <dbReference type="HAMAP-Rule" id="MF_01326"/>
    </source>
</evidence>
<evidence type="ECO:0000305" key="2"/>
<gene>
    <name evidence="1" type="primary">rplX</name>
    <name type="ordered locus">C8J_1600</name>
</gene>
<comment type="function">
    <text evidence="1">One of two assembly initiator proteins, it binds directly to the 5'-end of the 23S rRNA, where it nucleates assembly of the 50S subunit.</text>
</comment>
<comment type="function">
    <text evidence="1">One of the proteins that surrounds the polypeptide exit tunnel on the outside of the subunit.</text>
</comment>
<comment type="subunit">
    <text evidence="1">Part of the 50S ribosomal subunit.</text>
</comment>
<comment type="similarity">
    <text evidence="1">Belongs to the universal ribosomal protein uL24 family.</text>
</comment>
<organism>
    <name type="scientific">Campylobacter jejuni subsp. jejuni serotype O:6 (strain 81116 / NCTC 11828)</name>
    <dbReference type="NCBI Taxonomy" id="407148"/>
    <lineage>
        <taxon>Bacteria</taxon>
        <taxon>Pseudomonadati</taxon>
        <taxon>Campylobacterota</taxon>
        <taxon>Epsilonproteobacteria</taxon>
        <taxon>Campylobacterales</taxon>
        <taxon>Campylobacteraceae</taxon>
        <taxon>Campylobacter</taxon>
    </lineage>
</organism>
<sequence length="77" mass="8283">MAVKLKIKKGDSVKVITGDDKGKTGKVLAVYPKTLKVVVEGCKIAKKAIKPSEKNPNGGFINKEMPMDISNVAKVQE</sequence>
<accession>A8FP10</accession>